<evidence type="ECO:0000255" key="1">
    <source>
        <dbReference type="HAMAP-Rule" id="MF_00312"/>
    </source>
</evidence>
<evidence type="ECO:0000303" key="2">
    <source>
    </source>
</evidence>
<evidence type="ECO:0000312" key="3">
    <source>
        <dbReference type="EMBL" id="CAA56050.1"/>
    </source>
</evidence>
<proteinExistence type="inferred from homology"/>
<gene>
    <name evidence="1 2" type="primary">atpF</name>
    <name evidence="3" type="synonym">atpE</name>
    <name type="ordered locus">HVO_0315</name>
</gene>
<sequence length="106" mass="11583">MSQEIAVIGSPDFTTGFRLAGVRKFENVPDEAKDDELDEAVTRTLEDEDVGIIVMHEDDLDHLSRNARQSVERSIEPTLVTLGGSGGASGLRDQIKRAIGIDLMDE</sequence>
<accession>Q48331</accession>
<accession>D4GZU4</accession>
<protein>
    <recommendedName>
        <fullName evidence="1">A-type ATP synthase subunit F</fullName>
    </recommendedName>
</protein>
<name>AATF_HALVD</name>
<organism>
    <name type="scientific">Haloferax volcanii (strain ATCC 29605 / DSM 3757 / JCM 8879 / NBRC 14742 / NCIMB 2012 / VKM B-1768 / DS2)</name>
    <name type="common">Halobacterium volcanii</name>
    <dbReference type="NCBI Taxonomy" id="309800"/>
    <lineage>
        <taxon>Archaea</taxon>
        <taxon>Methanobacteriati</taxon>
        <taxon>Methanobacteriota</taxon>
        <taxon>Stenosarchaea group</taxon>
        <taxon>Halobacteria</taxon>
        <taxon>Halobacteriales</taxon>
        <taxon>Haloferacaceae</taxon>
        <taxon>Haloferax</taxon>
    </lineage>
</organism>
<dbReference type="EMBL" id="X79516">
    <property type="protein sequence ID" value="CAA56050.1"/>
    <property type="molecule type" value="Genomic_DNA"/>
</dbReference>
<dbReference type="EMBL" id="CP001956">
    <property type="protein sequence ID" value="ADE02550.1"/>
    <property type="molecule type" value="Genomic_DNA"/>
</dbReference>
<dbReference type="PIR" id="T47202">
    <property type="entry name" value="T47202"/>
</dbReference>
<dbReference type="RefSeq" id="WP_004044608.1">
    <property type="nucleotide sequence ID" value="NZ_AOHU01000102.1"/>
</dbReference>
<dbReference type="SMR" id="Q48331"/>
<dbReference type="STRING" id="309800.HVO_0315"/>
<dbReference type="PaxDb" id="309800-C498_17113"/>
<dbReference type="EnsemblBacteria" id="ADE02550">
    <property type="protein sequence ID" value="ADE02550"/>
    <property type="gene ID" value="HVO_0315"/>
</dbReference>
<dbReference type="GeneID" id="8925189"/>
<dbReference type="KEGG" id="hvo:HVO_0315"/>
<dbReference type="eggNOG" id="arCOG04102">
    <property type="taxonomic scope" value="Archaea"/>
</dbReference>
<dbReference type="HOGENOM" id="CLU_135754_2_2_2"/>
<dbReference type="OrthoDB" id="24971at2157"/>
<dbReference type="Proteomes" id="UP000008243">
    <property type="component" value="Chromosome"/>
</dbReference>
<dbReference type="GO" id="GO:0005886">
    <property type="term" value="C:plasma membrane"/>
    <property type="evidence" value="ECO:0007669"/>
    <property type="project" value="UniProtKB-SubCell"/>
</dbReference>
<dbReference type="GO" id="GO:0005524">
    <property type="term" value="F:ATP binding"/>
    <property type="evidence" value="ECO:0007669"/>
    <property type="project" value="UniProtKB-UniRule"/>
</dbReference>
<dbReference type="GO" id="GO:0046933">
    <property type="term" value="F:proton-transporting ATP synthase activity, rotational mechanism"/>
    <property type="evidence" value="ECO:0007669"/>
    <property type="project" value="UniProtKB-UniRule"/>
</dbReference>
<dbReference type="GO" id="GO:0046961">
    <property type="term" value="F:proton-transporting ATPase activity, rotational mechanism"/>
    <property type="evidence" value="ECO:0007669"/>
    <property type="project" value="InterPro"/>
</dbReference>
<dbReference type="GO" id="GO:0042777">
    <property type="term" value="P:proton motive force-driven plasma membrane ATP synthesis"/>
    <property type="evidence" value="ECO:0007669"/>
    <property type="project" value="UniProtKB-UniRule"/>
</dbReference>
<dbReference type="Gene3D" id="3.40.50.10580">
    <property type="entry name" value="ATPase, V1 complex, subunit F"/>
    <property type="match status" value="1"/>
</dbReference>
<dbReference type="HAMAP" id="MF_00312">
    <property type="entry name" value="ATP_synth_F_arch"/>
    <property type="match status" value="1"/>
</dbReference>
<dbReference type="InterPro" id="IPR008218">
    <property type="entry name" value="ATPase_V1-cplx_f_g_su"/>
</dbReference>
<dbReference type="InterPro" id="IPR022944">
    <property type="entry name" value="ATPase_V1-cplx_fsu_bac/arc"/>
</dbReference>
<dbReference type="InterPro" id="IPR036906">
    <property type="entry name" value="ATPase_V1_fsu_sf"/>
</dbReference>
<dbReference type="NCBIfam" id="NF002577">
    <property type="entry name" value="PRK02228.1"/>
    <property type="match status" value="1"/>
</dbReference>
<dbReference type="Pfam" id="PF01990">
    <property type="entry name" value="ATP-synt_F"/>
    <property type="match status" value="1"/>
</dbReference>
<dbReference type="SUPFAM" id="SSF159468">
    <property type="entry name" value="AtpF-like"/>
    <property type="match status" value="1"/>
</dbReference>
<comment type="function">
    <text evidence="1">Component of the A-type ATP synthase that produces ATP from ADP in the presence of a proton gradient across the membrane.</text>
</comment>
<comment type="subunit">
    <text evidence="1">Has multiple subunits with at least A(3), B(3), C, D, E, F, H, I and proteolipid K(x).</text>
</comment>
<comment type="subcellular location">
    <subcellularLocation>
        <location evidence="1">Cell membrane</location>
        <topology evidence="1">Peripheral membrane protein</topology>
    </subcellularLocation>
</comment>
<comment type="similarity">
    <text evidence="1">Belongs to the V-ATPase F subunit family.</text>
</comment>
<keyword id="KW-0066">ATP synthesis</keyword>
<keyword id="KW-1003">Cell membrane</keyword>
<keyword id="KW-0375">Hydrogen ion transport</keyword>
<keyword id="KW-0406">Ion transport</keyword>
<keyword id="KW-0472">Membrane</keyword>
<keyword id="KW-1185">Reference proteome</keyword>
<keyword id="KW-0813">Transport</keyword>
<reference key="1">
    <citation type="journal article" date="1995" name="Biochim. Biophys. Acta">
        <title>Nucleotide sequence of the ATPase A- and B-subunits of the halophilic archaebacterium Haloferax volcanii and characterization of the enzyme.</title>
        <authorList>
            <person name="Steinert K."/>
            <person name="Kroth-Pancic P.G."/>
            <person name="Bickel-Sandkoetter S."/>
        </authorList>
    </citation>
    <scope>NUCLEOTIDE SEQUENCE [GENOMIC DNA]</scope>
    <source>
        <strain>DS2 / WR 340</strain>
    </source>
</reference>
<reference key="2">
    <citation type="journal article" date="2010" name="PLoS ONE">
        <title>The complete genome sequence of Haloferax volcanii DS2, a model archaeon.</title>
        <authorList>
            <person name="Hartman A.L."/>
            <person name="Norais C."/>
            <person name="Badger J.H."/>
            <person name="Delmas S."/>
            <person name="Haldenby S."/>
            <person name="Madupu R."/>
            <person name="Robinson J."/>
            <person name="Khouri H."/>
            <person name="Ren Q."/>
            <person name="Lowe T.M."/>
            <person name="Maupin-Furlow J."/>
            <person name="Pohlschroder M."/>
            <person name="Daniels C."/>
            <person name="Pfeiffer F."/>
            <person name="Allers T."/>
            <person name="Eisen J.A."/>
        </authorList>
    </citation>
    <scope>NUCLEOTIDE SEQUENCE [LARGE SCALE GENOMIC DNA]</scope>
    <source>
        <strain>ATCC 29605 / DSM 3757 / JCM 8879 / NBRC 14742 / NCIMB 2012 / VKM B-1768 / DS2</strain>
    </source>
</reference>
<feature type="chain" id="PRO_0000144816" description="A-type ATP synthase subunit F">
    <location>
        <begin position="1"/>
        <end position="106"/>
    </location>
</feature>